<evidence type="ECO:0000255" key="1">
    <source>
        <dbReference type="HAMAP-Rule" id="MF_01543"/>
    </source>
</evidence>
<comment type="catalytic activity">
    <reaction evidence="1">
        <text>(6S)-5,6,7,8-tetrahydrofolate + formate + ATP = (6R)-10-formyltetrahydrofolate + ADP + phosphate</text>
        <dbReference type="Rhea" id="RHEA:20221"/>
        <dbReference type="ChEBI" id="CHEBI:15740"/>
        <dbReference type="ChEBI" id="CHEBI:30616"/>
        <dbReference type="ChEBI" id="CHEBI:43474"/>
        <dbReference type="ChEBI" id="CHEBI:57453"/>
        <dbReference type="ChEBI" id="CHEBI:195366"/>
        <dbReference type="ChEBI" id="CHEBI:456216"/>
        <dbReference type="EC" id="6.3.4.3"/>
    </reaction>
</comment>
<comment type="pathway">
    <text evidence="1">One-carbon metabolism; tetrahydrofolate interconversion.</text>
</comment>
<comment type="similarity">
    <text evidence="1">Belongs to the formate--tetrahydrofolate ligase family.</text>
</comment>
<keyword id="KW-0067">ATP-binding</keyword>
<keyword id="KW-0436">Ligase</keyword>
<keyword id="KW-0547">Nucleotide-binding</keyword>
<keyword id="KW-0554">One-carbon metabolism</keyword>
<reference key="1">
    <citation type="submission" date="2007-05" db="EMBL/GenBank/DDBJ databases">
        <title>Complete sequence of Thermosipho melanesiensis BI429.</title>
        <authorList>
            <consortium name="US DOE Joint Genome Institute"/>
            <person name="Copeland A."/>
            <person name="Lucas S."/>
            <person name="Lapidus A."/>
            <person name="Barry K."/>
            <person name="Glavina del Rio T."/>
            <person name="Dalin E."/>
            <person name="Tice H."/>
            <person name="Pitluck S."/>
            <person name="Chertkov O."/>
            <person name="Brettin T."/>
            <person name="Bruce D."/>
            <person name="Detter J.C."/>
            <person name="Han C."/>
            <person name="Schmutz J."/>
            <person name="Larimer F."/>
            <person name="Land M."/>
            <person name="Hauser L."/>
            <person name="Kyrpides N."/>
            <person name="Mikhailova N."/>
            <person name="Nelson K."/>
            <person name="Gogarten J.P."/>
            <person name="Noll K."/>
            <person name="Richardson P."/>
        </authorList>
    </citation>
    <scope>NUCLEOTIDE SEQUENCE [LARGE SCALE GENOMIC DNA]</scope>
    <source>
        <strain>DSM 12029 / CIP 104789 / BI429</strain>
    </source>
</reference>
<protein>
    <recommendedName>
        <fullName evidence="1">Formate--tetrahydrofolate ligase</fullName>
        <ecNumber evidence="1">6.3.4.3</ecNumber>
    </recommendedName>
    <alternativeName>
        <fullName evidence="1">Formyltetrahydrofolate synthetase</fullName>
        <shortName evidence="1">FHS</shortName>
        <shortName evidence="1">FTHFS</shortName>
    </alternativeName>
</protein>
<proteinExistence type="inferred from homology"/>
<sequence length="551" mass="59916">MKTDIEIAREAKLKRISDIAKDIGIEEKYLEPYGKYIAKVDLKFLKTLNNKKDGKLILVTAITPTPAGEGKTTTSIGLSMALNRLGKKSIVTLREPSLGPVFGIKGGAAGGGYSQVLPMENINLHFTGDIHAISSAHNLISAVIDSHIKFGNNLNINPTKVFWKRTMDMNDRALRQIIVGLGGNANGLPREDGFIITAASEIMAILCLAKDLKDLKERLGNIVVAESFDKKLVRVKDLKIEGALTALLKDAINPNIVQTIENTPAFIHGGPFANIAHGTNSIIATKLALKLTDYVVTEAGFAADLGAEKFLDFVTQVGNFDVNAVVLVATIKALKYHGGIKKDELNKENVDAMLKGMENLKTHIENLKLYNVPVVVALNVFASDTTNELKAFSEHCNAPHALVRAFEKGSKGTIELANTVLENISDSKHIPILNPEMSIEEKIETLATKVYRARKVIYTDTAKSKLKFLKRHGFETLPVIVAKTQSSISDDPKKLNAPRDYNFTIRDFELSAGAGFVVALAGEIMRMPGLSKIPNAVNIDVDEDGNIVGLS</sequence>
<organism>
    <name type="scientific">Thermosipho melanesiensis (strain DSM 12029 / CIP 104789 / BI429)</name>
    <dbReference type="NCBI Taxonomy" id="391009"/>
    <lineage>
        <taxon>Bacteria</taxon>
        <taxon>Thermotogati</taxon>
        <taxon>Thermotogota</taxon>
        <taxon>Thermotogae</taxon>
        <taxon>Thermotogales</taxon>
        <taxon>Fervidobacteriaceae</taxon>
        <taxon>Thermosipho</taxon>
    </lineage>
</organism>
<dbReference type="EC" id="6.3.4.3" evidence="1"/>
<dbReference type="EMBL" id="CP000716">
    <property type="protein sequence ID" value="ABR30176.1"/>
    <property type="molecule type" value="Genomic_DNA"/>
</dbReference>
<dbReference type="RefSeq" id="WP_012056537.1">
    <property type="nucleotide sequence ID" value="NC_009616.1"/>
</dbReference>
<dbReference type="SMR" id="A6LJS5"/>
<dbReference type="STRING" id="391009.Tmel_0304"/>
<dbReference type="KEGG" id="tme:Tmel_0304"/>
<dbReference type="eggNOG" id="COG2759">
    <property type="taxonomic scope" value="Bacteria"/>
</dbReference>
<dbReference type="HOGENOM" id="CLU_003601_3_3_0"/>
<dbReference type="OrthoDB" id="9761733at2"/>
<dbReference type="UniPathway" id="UPA00193"/>
<dbReference type="Proteomes" id="UP000001110">
    <property type="component" value="Chromosome"/>
</dbReference>
<dbReference type="GO" id="GO:0005524">
    <property type="term" value="F:ATP binding"/>
    <property type="evidence" value="ECO:0007669"/>
    <property type="project" value="UniProtKB-UniRule"/>
</dbReference>
<dbReference type="GO" id="GO:0004329">
    <property type="term" value="F:formate-tetrahydrofolate ligase activity"/>
    <property type="evidence" value="ECO:0007669"/>
    <property type="project" value="UniProtKB-UniRule"/>
</dbReference>
<dbReference type="GO" id="GO:0035999">
    <property type="term" value="P:tetrahydrofolate interconversion"/>
    <property type="evidence" value="ECO:0007669"/>
    <property type="project" value="UniProtKB-UniRule"/>
</dbReference>
<dbReference type="CDD" id="cd00477">
    <property type="entry name" value="FTHFS"/>
    <property type="match status" value="1"/>
</dbReference>
<dbReference type="FunFam" id="3.30.1510.10:FF:000001">
    <property type="entry name" value="Formate--tetrahydrofolate ligase"/>
    <property type="match status" value="1"/>
</dbReference>
<dbReference type="FunFam" id="3.10.410.10:FF:000001">
    <property type="entry name" value="Putative formate--tetrahydrofolate ligase"/>
    <property type="match status" value="1"/>
</dbReference>
<dbReference type="Gene3D" id="3.30.1510.10">
    <property type="entry name" value="Domain 2, N(10)-formyltetrahydrofolate synthetase"/>
    <property type="match status" value="1"/>
</dbReference>
<dbReference type="Gene3D" id="3.10.410.10">
    <property type="entry name" value="Formyltetrahydrofolate synthetase, domain 3"/>
    <property type="match status" value="1"/>
</dbReference>
<dbReference type="Gene3D" id="3.40.50.300">
    <property type="entry name" value="P-loop containing nucleotide triphosphate hydrolases"/>
    <property type="match status" value="1"/>
</dbReference>
<dbReference type="HAMAP" id="MF_01543">
    <property type="entry name" value="FTHFS"/>
    <property type="match status" value="1"/>
</dbReference>
<dbReference type="InterPro" id="IPR000559">
    <property type="entry name" value="Formate_THF_ligase"/>
</dbReference>
<dbReference type="InterPro" id="IPR020628">
    <property type="entry name" value="Formate_THF_ligase_CS"/>
</dbReference>
<dbReference type="InterPro" id="IPR027417">
    <property type="entry name" value="P-loop_NTPase"/>
</dbReference>
<dbReference type="NCBIfam" id="NF010030">
    <property type="entry name" value="PRK13505.1"/>
    <property type="match status" value="1"/>
</dbReference>
<dbReference type="Pfam" id="PF01268">
    <property type="entry name" value="FTHFS"/>
    <property type="match status" value="1"/>
</dbReference>
<dbReference type="SUPFAM" id="SSF52540">
    <property type="entry name" value="P-loop containing nucleoside triphosphate hydrolases"/>
    <property type="match status" value="1"/>
</dbReference>
<dbReference type="PROSITE" id="PS00721">
    <property type="entry name" value="FTHFS_1"/>
    <property type="match status" value="1"/>
</dbReference>
<accession>A6LJS5</accession>
<name>FTHS_THEM4</name>
<feature type="chain" id="PRO_1000068798" description="Formate--tetrahydrofolate ligase">
    <location>
        <begin position="1"/>
        <end position="551"/>
    </location>
</feature>
<feature type="binding site" evidence="1">
    <location>
        <begin position="65"/>
        <end position="72"/>
    </location>
    <ligand>
        <name>ATP</name>
        <dbReference type="ChEBI" id="CHEBI:30616"/>
    </ligand>
</feature>
<gene>
    <name evidence="1" type="primary">fhs</name>
    <name type="ordered locus">Tmel_0304</name>
</gene>